<keyword id="KW-0963">Cytoplasm</keyword>
<keyword id="KW-0489">Methyltransferase</keyword>
<keyword id="KW-0698">rRNA processing</keyword>
<keyword id="KW-0949">S-adenosyl-L-methionine</keyword>
<keyword id="KW-0808">Transferase</keyword>
<evidence type="ECO:0000255" key="1">
    <source>
        <dbReference type="HAMAP-Rule" id="MF_01862"/>
    </source>
</evidence>
<accession>A9R058</accession>
<organism>
    <name type="scientific">Yersinia pestis bv. Antiqua (strain Angola)</name>
    <dbReference type="NCBI Taxonomy" id="349746"/>
    <lineage>
        <taxon>Bacteria</taxon>
        <taxon>Pseudomonadati</taxon>
        <taxon>Pseudomonadota</taxon>
        <taxon>Gammaproteobacteria</taxon>
        <taxon>Enterobacterales</taxon>
        <taxon>Yersiniaceae</taxon>
        <taxon>Yersinia</taxon>
    </lineage>
</organism>
<feature type="chain" id="PRO_0000369802" description="Ribosomal RNA small subunit methyltransferase C">
    <location>
        <begin position="1"/>
        <end position="347"/>
    </location>
</feature>
<name>RSMC_YERPG</name>
<proteinExistence type="inferred from homology"/>
<gene>
    <name evidence="1" type="primary">rsmC</name>
    <name type="ordered locus">YpAngola_A0840</name>
</gene>
<comment type="function">
    <text evidence="1">Specifically methylates the guanine in position 1207 of 16S rRNA in the 30S particle.</text>
</comment>
<comment type="catalytic activity">
    <reaction evidence="1">
        <text>guanosine(1207) in 16S rRNA + S-adenosyl-L-methionine = N(2)-methylguanosine(1207) in 16S rRNA + S-adenosyl-L-homocysteine + H(+)</text>
        <dbReference type="Rhea" id="RHEA:42736"/>
        <dbReference type="Rhea" id="RHEA-COMP:10213"/>
        <dbReference type="Rhea" id="RHEA-COMP:10214"/>
        <dbReference type="ChEBI" id="CHEBI:15378"/>
        <dbReference type="ChEBI" id="CHEBI:57856"/>
        <dbReference type="ChEBI" id="CHEBI:59789"/>
        <dbReference type="ChEBI" id="CHEBI:74269"/>
        <dbReference type="ChEBI" id="CHEBI:74481"/>
        <dbReference type="EC" id="2.1.1.172"/>
    </reaction>
</comment>
<comment type="subunit">
    <text evidence="1">Monomer.</text>
</comment>
<comment type="subcellular location">
    <subcellularLocation>
        <location evidence="1">Cytoplasm</location>
    </subcellularLocation>
</comment>
<comment type="similarity">
    <text evidence="1">Belongs to the methyltransferase superfamily. RsmC family.</text>
</comment>
<sequence>MSALTPASEVILRHSDEFIARHVLFAGDLQDALPAQFDAAGVRVHTNQYHHWQLLSNTLEENVQFGLLATAETLAACDTLIYYWPKSKQEAQFQLANLLSILPVGTDIFVVGENRSGVRSAEEMLADFAQLAKIDSARRCGLYHGRLDKQPEFDADAWWESYQVGGVTVKTLPGVFSRDSLDSGSHLLLSTFNEPFKGSVLDVGCGAGVLASVLAQQSPKIKWTLSDVSAAAIEASRATLAVNNIEAQVIASNVYSDIKGRFEMIISNPPFHDGIQTSLTAAEMLIRGATAHLHVGGKLRIVANSFLPYPALLDAAFGSHEVLAQNGRFKVYQATVGRPPRDPKKKR</sequence>
<dbReference type="EC" id="2.1.1.172" evidence="1"/>
<dbReference type="EMBL" id="CP000901">
    <property type="protein sequence ID" value="ABX86637.1"/>
    <property type="molecule type" value="Genomic_DNA"/>
</dbReference>
<dbReference type="RefSeq" id="WP_002209206.1">
    <property type="nucleotide sequence ID" value="NZ_CP009935.1"/>
</dbReference>
<dbReference type="SMR" id="A9R058"/>
<dbReference type="GeneID" id="57974183"/>
<dbReference type="KEGG" id="ypg:YpAngola_A0840"/>
<dbReference type="PATRIC" id="fig|349746.12.peg.1792"/>
<dbReference type="GO" id="GO:0005737">
    <property type="term" value="C:cytoplasm"/>
    <property type="evidence" value="ECO:0007669"/>
    <property type="project" value="UniProtKB-SubCell"/>
</dbReference>
<dbReference type="GO" id="GO:0052914">
    <property type="term" value="F:16S rRNA (guanine(1207)-N(2))-methyltransferase activity"/>
    <property type="evidence" value="ECO:0007669"/>
    <property type="project" value="UniProtKB-EC"/>
</dbReference>
<dbReference type="GO" id="GO:0003676">
    <property type="term" value="F:nucleic acid binding"/>
    <property type="evidence" value="ECO:0007669"/>
    <property type="project" value="InterPro"/>
</dbReference>
<dbReference type="CDD" id="cd02440">
    <property type="entry name" value="AdoMet_MTases"/>
    <property type="match status" value="1"/>
</dbReference>
<dbReference type="Gene3D" id="3.40.50.150">
    <property type="entry name" value="Vaccinia Virus protein VP39"/>
    <property type="match status" value="2"/>
</dbReference>
<dbReference type="HAMAP" id="MF_01862">
    <property type="entry name" value="16SrRNA_methyltr_C"/>
    <property type="match status" value="1"/>
</dbReference>
<dbReference type="InterPro" id="IPR002052">
    <property type="entry name" value="DNA_methylase_N6_adenine_CS"/>
</dbReference>
<dbReference type="InterPro" id="IPR013675">
    <property type="entry name" value="Mtase_sm_N"/>
</dbReference>
<dbReference type="InterPro" id="IPR023543">
    <property type="entry name" value="rRNA_ssu_MeTfrase_C"/>
</dbReference>
<dbReference type="InterPro" id="IPR046977">
    <property type="entry name" value="RsmC/RlmG"/>
</dbReference>
<dbReference type="InterPro" id="IPR029063">
    <property type="entry name" value="SAM-dependent_MTases_sf"/>
</dbReference>
<dbReference type="InterPro" id="IPR007848">
    <property type="entry name" value="Small_mtfrase_dom"/>
</dbReference>
<dbReference type="NCBIfam" id="NF007023">
    <property type="entry name" value="PRK09489.1"/>
    <property type="match status" value="1"/>
</dbReference>
<dbReference type="PANTHER" id="PTHR47816">
    <property type="entry name" value="RIBOSOMAL RNA SMALL SUBUNIT METHYLTRANSFERASE C"/>
    <property type="match status" value="1"/>
</dbReference>
<dbReference type="PANTHER" id="PTHR47816:SF4">
    <property type="entry name" value="RIBOSOMAL RNA SMALL SUBUNIT METHYLTRANSFERASE C"/>
    <property type="match status" value="1"/>
</dbReference>
<dbReference type="Pfam" id="PF05175">
    <property type="entry name" value="MTS"/>
    <property type="match status" value="1"/>
</dbReference>
<dbReference type="Pfam" id="PF08468">
    <property type="entry name" value="MTS_N"/>
    <property type="match status" value="1"/>
</dbReference>
<dbReference type="SUPFAM" id="SSF53335">
    <property type="entry name" value="S-adenosyl-L-methionine-dependent methyltransferases"/>
    <property type="match status" value="1"/>
</dbReference>
<reference key="1">
    <citation type="journal article" date="2010" name="J. Bacteriol.">
        <title>Genome sequence of the deep-rooted Yersinia pestis strain Angola reveals new insights into the evolution and pangenome of the plague bacterium.</title>
        <authorList>
            <person name="Eppinger M."/>
            <person name="Worsham P.L."/>
            <person name="Nikolich M.P."/>
            <person name="Riley D.R."/>
            <person name="Sebastian Y."/>
            <person name="Mou S."/>
            <person name="Achtman M."/>
            <person name="Lindler L.E."/>
            <person name="Ravel J."/>
        </authorList>
    </citation>
    <scope>NUCLEOTIDE SEQUENCE [LARGE SCALE GENOMIC DNA]</scope>
    <source>
        <strain>Angola</strain>
    </source>
</reference>
<protein>
    <recommendedName>
        <fullName evidence="1">Ribosomal RNA small subunit methyltransferase C</fullName>
        <ecNumber evidence="1">2.1.1.172</ecNumber>
    </recommendedName>
    <alternativeName>
        <fullName evidence="1">16S rRNA m2G1207 methyltransferase</fullName>
    </alternativeName>
    <alternativeName>
        <fullName evidence="1">rRNA (guanine-N(2)-)-methyltransferase RsmC</fullName>
    </alternativeName>
</protein>